<comment type="function">
    <text evidence="1">Catalyzes the oxidative demethylation of N-methyl-L-tryptophan.</text>
</comment>
<comment type="catalytic activity">
    <reaction evidence="1">
        <text>N(alpha)-methyl-L-tryptophan + O2 + H2O = L-tryptophan + formaldehyde + H2O2</text>
        <dbReference type="Rhea" id="RHEA:28006"/>
        <dbReference type="ChEBI" id="CHEBI:15377"/>
        <dbReference type="ChEBI" id="CHEBI:15379"/>
        <dbReference type="ChEBI" id="CHEBI:16240"/>
        <dbReference type="ChEBI" id="CHEBI:16842"/>
        <dbReference type="ChEBI" id="CHEBI:57283"/>
        <dbReference type="ChEBI" id="CHEBI:57912"/>
    </reaction>
</comment>
<comment type="cofactor">
    <cofactor evidence="1">
        <name>FAD</name>
        <dbReference type="ChEBI" id="CHEBI:57692"/>
    </cofactor>
    <text evidence="1">Binds 1 FAD per subunit.</text>
</comment>
<comment type="subunit">
    <text evidence="1">Monomer.</text>
</comment>
<comment type="similarity">
    <text evidence="1">Belongs to the MSOX/MTOX family. MTOX subfamily.</text>
</comment>
<accession>B2TTL2</accession>
<dbReference type="EC" id="1.5.3.-" evidence="1"/>
<dbReference type="EMBL" id="CP001063">
    <property type="protein sequence ID" value="ACD06641.1"/>
    <property type="molecule type" value="Genomic_DNA"/>
</dbReference>
<dbReference type="RefSeq" id="WP_000872815.1">
    <property type="nucleotide sequence ID" value="NC_010658.1"/>
</dbReference>
<dbReference type="SMR" id="B2TTL2"/>
<dbReference type="STRING" id="344609.SbBS512_E2268"/>
<dbReference type="KEGG" id="sbc:SbBS512_E2268"/>
<dbReference type="HOGENOM" id="CLU_007884_2_1_6"/>
<dbReference type="Proteomes" id="UP000001030">
    <property type="component" value="Chromosome"/>
</dbReference>
<dbReference type="GO" id="GO:0005829">
    <property type="term" value="C:cytosol"/>
    <property type="evidence" value="ECO:0007669"/>
    <property type="project" value="TreeGrafter"/>
</dbReference>
<dbReference type="GO" id="GO:0050660">
    <property type="term" value="F:flavin adenine dinucleotide binding"/>
    <property type="evidence" value="ECO:0007669"/>
    <property type="project" value="InterPro"/>
</dbReference>
<dbReference type="GO" id="GO:0050131">
    <property type="term" value="F:N-methyl-L-amino-acid oxidase activity"/>
    <property type="evidence" value="ECO:0007669"/>
    <property type="project" value="InterPro"/>
</dbReference>
<dbReference type="GO" id="GO:0008115">
    <property type="term" value="F:sarcosine oxidase activity"/>
    <property type="evidence" value="ECO:0007669"/>
    <property type="project" value="TreeGrafter"/>
</dbReference>
<dbReference type="Gene3D" id="3.30.9.10">
    <property type="entry name" value="D-Amino Acid Oxidase, subunit A, domain 2"/>
    <property type="match status" value="1"/>
</dbReference>
<dbReference type="Gene3D" id="3.50.50.60">
    <property type="entry name" value="FAD/NAD(P)-binding domain"/>
    <property type="match status" value="1"/>
</dbReference>
<dbReference type="HAMAP" id="MF_00515">
    <property type="entry name" value="MTOX"/>
    <property type="match status" value="1"/>
</dbReference>
<dbReference type="InterPro" id="IPR006076">
    <property type="entry name" value="FAD-dep_OxRdtase"/>
</dbReference>
<dbReference type="InterPro" id="IPR036188">
    <property type="entry name" value="FAD/NAD-bd_sf"/>
</dbReference>
<dbReference type="InterPro" id="IPR023493">
    <property type="entry name" value="Me_Trp_Oxase_MTOX"/>
</dbReference>
<dbReference type="InterPro" id="IPR045170">
    <property type="entry name" value="MTOX"/>
</dbReference>
<dbReference type="NCBIfam" id="NF008425">
    <property type="entry name" value="PRK11259.1"/>
    <property type="match status" value="1"/>
</dbReference>
<dbReference type="PANTHER" id="PTHR10961:SF7">
    <property type="entry name" value="FAD DEPENDENT OXIDOREDUCTASE DOMAIN-CONTAINING PROTEIN"/>
    <property type="match status" value="1"/>
</dbReference>
<dbReference type="PANTHER" id="PTHR10961">
    <property type="entry name" value="PEROXISOMAL SARCOSINE OXIDASE"/>
    <property type="match status" value="1"/>
</dbReference>
<dbReference type="Pfam" id="PF01266">
    <property type="entry name" value="DAO"/>
    <property type="match status" value="1"/>
</dbReference>
<dbReference type="SUPFAM" id="SSF54373">
    <property type="entry name" value="FAD-linked reductases, C-terminal domain"/>
    <property type="match status" value="1"/>
</dbReference>
<dbReference type="SUPFAM" id="SSF51905">
    <property type="entry name" value="FAD/NAD(P)-binding domain"/>
    <property type="match status" value="1"/>
</dbReference>
<proteinExistence type="inferred from homology"/>
<keyword id="KW-0274">FAD</keyword>
<keyword id="KW-0285">Flavoprotein</keyword>
<keyword id="KW-0560">Oxidoreductase</keyword>
<keyword id="KW-1185">Reference proteome</keyword>
<sequence length="372" mass="40914">MKYDLIIIGSGSVGAAAGYYATRAGLNVLMTDAHMPPHQHGSHHGDTRLIRHAYGEGEKYVPLVLRAQTLWDELSRHNEDDPIFVRSGVINLGPADSAFLANVAHSAEQWQLNVEKLDAQGIMARWPEIRVPDNYIGLFETDSGFLRSELAIKTWIQLAKEAGCAQLFNCPVTAIRHDDDGVTIETVDGEYQAKKAIVCAGTWVKDLLPELPVQPVRKVFAWYQADGRYSVKNKFPAFTGELPNGDQYYGFPAENDALKIGKHNGGQVIHSADERVPFAEVVSDGSEAFPFLRNVLPGIGCCLYGAACTYDNSPDEDFIIDTLPGHDNTLLITGLSGHGFKFASVLGEIAADFAQDKKSDFDLTPFRLSRFQ</sequence>
<feature type="chain" id="PRO_1000127450" description="N-methyl-L-tryptophan oxidase">
    <location>
        <begin position="1"/>
        <end position="372"/>
    </location>
</feature>
<feature type="binding site" evidence="1">
    <location>
        <begin position="4"/>
        <end position="34"/>
    </location>
    <ligand>
        <name>FAD</name>
        <dbReference type="ChEBI" id="CHEBI:57692"/>
    </ligand>
</feature>
<feature type="modified residue" description="S-8alpha-FAD cysteine" evidence="1">
    <location>
        <position position="308"/>
    </location>
</feature>
<name>MTOX_SHIB3</name>
<organism>
    <name type="scientific">Shigella boydii serotype 18 (strain CDC 3083-94 / BS512)</name>
    <dbReference type="NCBI Taxonomy" id="344609"/>
    <lineage>
        <taxon>Bacteria</taxon>
        <taxon>Pseudomonadati</taxon>
        <taxon>Pseudomonadota</taxon>
        <taxon>Gammaproteobacteria</taxon>
        <taxon>Enterobacterales</taxon>
        <taxon>Enterobacteriaceae</taxon>
        <taxon>Shigella</taxon>
    </lineage>
</organism>
<reference key="1">
    <citation type="submission" date="2008-05" db="EMBL/GenBank/DDBJ databases">
        <title>Complete sequence of Shigella boydii serotype 18 strain BS512.</title>
        <authorList>
            <person name="Rasko D.A."/>
            <person name="Rosovitz M."/>
            <person name="Maurelli A.T."/>
            <person name="Myers G."/>
            <person name="Seshadri R."/>
            <person name="Cer R."/>
            <person name="Jiang L."/>
            <person name="Ravel J."/>
            <person name="Sebastian Y."/>
        </authorList>
    </citation>
    <scope>NUCLEOTIDE SEQUENCE [LARGE SCALE GENOMIC DNA]</scope>
    <source>
        <strain>CDC 3083-94 / BS512</strain>
    </source>
</reference>
<protein>
    <recommendedName>
        <fullName evidence="1">N-methyl-L-tryptophan oxidase</fullName>
        <shortName evidence="1">MTOX</shortName>
        <ecNumber evidence="1">1.5.3.-</ecNumber>
    </recommendedName>
</protein>
<evidence type="ECO:0000255" key="1">
    <source>
        <dbReference type="HAMAP-Rule" id="MF_00515"/>
    </source>
</evidence>
<gene>
    <name evidence="1" type="primary">solA</name>
    <name type="ordered locus">SbBS512_E2268</name>
</gene>